<reference key="1">
    <citation type="journal article" date="2006" name="PLoS Genet.">
        <title>Comparative genomics of emerging human ehrlichiosis agents.</title>
        <authorList>
            <person name="Dunning Hotopp J.C."/>
            <person name="Lin M."/>
            <person name="Madupu R."/>
            <person name="Crabtree J."/>
            <person name="Angiuoli S.V."/>
            <person name="Eisen J.A."/>
            <person name="Seshadri R."/>
            <person name="Ren Q."/>
            <person name="Wu M."/>
            <person name="Utterback T.R."/>
            <person name="Smith S."/>
            <person name="Lewis M."/>
            <person name="Khouri H."/>
            <person name="Zhang C."/>
            <person name="Niu H."/>
            <person name="Lin Q."/>
            <person name="Ohashi N."/>
            <person name="Zhi N."/>
            <person name="Nelson W.C."/>
            <person name="Brinkac L.M."/>
            <person name="Dodson R.J."/>
            <person name="Rosovitz M.J."/>
            <person name="Sundaram J.P."/>
            <person name="Daugherty S.C."/>
            <person name="Davidsen T."/>
            <person name="Durkin A.S."/>
            <person name="Gwinn M.L."/>
            <person name="Haft D.H."/>
            <person name="Selengut J.D."/>
            <person name="Sullivan S.A."/>
            <person name="Zafar N."/>
            <person name="Zhou L."/>
            <person name="Benahmed F."/>
            <person name="Forberger H."/>
            <person name="Halpin R."/>
            <person name="Mulligan S."/>
            <person name="Robinson J."/>
            <person name="White O."/>
            <person name="Rikihisa Y."/>
            <person name="Tettelin H."/>
        </authorList>
    </citation>
    <scope>NUCLEOTIDE SEQUENCE [LARGE SCALE GENOMIC DNA]</scope>
    <source>
        <strain>HZ</strain>
    </source>
</reference>
<keyword id="KW-0963">Cytoplasm</keyword>
<keyword id="KW-0460">Magnesium</keyword>
<keyword id="KW-0479">Metal-binding</keyword>
<keyword id="KW-0548">Nucleotidyltransferase</keyword>
<keyword id="KW-0694">RNA-binding</keyword>
<keyword id="KW-0808">Transferase</keyword>
<dbReference type="EC" id="2.7.7.8" evidence="1"/>
<dbReference type="EMBL" id="CP000235">
    <property type="protein sequence ID" value="ABD44311.1"/>
    <property type="molecule type" value="Genomic_DNA"/>
</dbReference>
<dbReference type="RefSeq" id="WP_011450867.1">
    <property type="nucleotide sequence ID" value="NC_007797.1"/>
</dbReference>
<dbReference type="SMR" id="Q2GJV5"/>
<dbReference type="STRING" id="212042.APH_0767"/>
<dbReference type="PaxDb" id="212042-APH_0767"/>
<dbReference type="EnsemblBacteria" id="ABD44311">
    <property type="protein sequence ID" value="ABD44311"/>
    <property type="gene ID" value="APH_0767"/>
</dbReference>
<dbReference type="GeneID" id="92748199"/>
<dbReference type="KEGG" id="aph:APH_0767"/>
<dbReference type="eggNOG" id="COG1185">
    <property type="taxonomic scope" value="Bacteria"/>
</dbReference>
<dbReference type="HOGENOM" id="CLU_004217_2_2_5"/>
<dbReference type="Proteomes" id="UP000001943">
    <property type="component" value="Chromosome"/>
</dbReference>
<dbReference type="GO" id="GO:0005829">
    <property type="term" value="C:cytosol"/>
    <property type="evidence" value="ECO:0007669"/>
    <property type="project" value="TreeGrafter"/>
</dbReference>
<dbReference type="GO" id="GO:0000175">
    <property type="term" value="F:3'-5'-RNA exonuclease activity"/>
    <property type="evidence" value="ECO:0007669"/>
    <property type="project" value="TreeGrafter"/>
</dbReference>
<dbReference type="GO" id="GO:0000287">
    <property type="term" value="F:magnesium ion binding"/>
    <property type="evidence" value="ECO:0007669"/>
    <property type="project" value="UniProtKB-UniRule"/>
</dbReference>
<dbReference type="GO" id="GO:0004654">
    <property type="term" value="F:polyribonucleotide nucleotidyltransferase activity"/>
    <property type="evidence" value="ECO:0007669"/>
    <property type="project" value="UniProtKB-UniRule"/>
</dbReference>
<dbReference type="GO" id="GO:0003723">
    <property type="term" value="F:RNA binding"/>
    <property type="evidence" value="ECO:0007669"/>
    <property type="project" value="UniProtKB-UniRule"/>
</dbReference>
<dbReference type="GO" id="GO:0006402">
    <property type="term" value="P:mRNA catabolic process"/>
    <property type="evidence" value="ECO:0007669"/>
    <property type="project" value="UniProtKB-UniRule"/>
</dbReference>
<dbReference type="GO" id="GO:0006396">
    <property type="term" value="P:RNA processing"/>
    <property type="evidence" value="ECO:0007669"/>
    <property type="project" value="InterPro"/>
</dbReference>
<dbReference type="CDD" id="cd02393">
    <property type="entry name" value="KH-I_PNPase"/>
    <property type="match status" value="1"/>
</dbReference>
<dbReference type="CDD" id="cd11363">
    <property type="entry name" value="RNase_PH_PNPase_1"/>
    <property type="match status" value="1"/>
</dbReference>
<dbReference type="CDD" id="cd11364">
    <property type="entry name" value="RNase_PH_PNPase_2"/>
    <property type="match status" value="1"/>
</dbReference>
<dbReference type="CDD" id="cd04472">
    <property type="entry name" value="S1_PNPase"/>
    <property type="match status" value="1"/>
</dbReference>
<dbReference type="FunFam" id="2.40.50.140:FF:000107">
    <property type="entry name" value="Polyribonucleotide nucleotidyltransferase"/>
    <property type="match status" value="1"/>
</dbReference>
<dbReference type="FunFam" id="3.30.1370.10:FF:000001">
    <property type="entry name" value="Polyribonucleotide nucleotidyltransferase"/>
    <property type="match status" value="1"/>
</dbReference>
<dbReference type="FunFam" id="3.30.230.70:FF:000001">
    <property type="entry name" value="Polyribonucleotide nucleotidyltransferase"/>
    <property type="match status" value="1"/>
</dbReference>
<dbReference type="FunFam" id="3.30.230.70:FF:000002">
    <property type="entry name" value="Polyribonucleotide nucleotidyltransferase"/>
    <property type="match status" value="1"/>
</dbReference>
<dbReference type="Gene3D" id="3.30.230.70">
    <property type="entry name" value="GHMP Kinase, N-terminal domain"/>
    <property type="match status" value="2"/>
</dbReference>
<dbReference type="Gene3D" id="3.30.1370.10">
    <property type="entry name" value="K Homology domain, type 1"/>
    <property type="match status" value="1"/>
</dbReference>
<dbReference type="Gene3D" id="2.40.50.140">
    <property type="entry name" value="Nucleic acid-binding proteins"/>
    <property type="match status" value="1"/>
</dbReference>
<dbReference type="HAMAP" id="MF_01595">
    <property type="entry name" value="PNPase"/>
    <property type="match status" value="1"/>
</dbReference>
<dbReference type="InterPro" id="IPR001247">
    <property type="entry name" value="ExoRNase_PH_dom1"/>
</dbReference>
<dbReference type="InterPro" id="IPR015847">
    <property type="entry name" value="ExoRNase_PH_dom2"/>
</dbReference>
<dbReference type="InterPro" id="IPR036345">
    <property type="entry name" value="ExoRNase_PH_dom2_sf"/>
</dbReference>
<dbReference type="InterPro" id="IPR004087">
    <property type="entry name" value="KH_dom"/>
</dbReference>
<dbReference type="InterPro" id="IPR004088">
    <property type="entry name" value="KH_dom_type_1"/>
</dbReference>
<dbReference type="InterPro" id="IPR036612">
    <property type="entry name" value="KH_dom_type_1_sf"/>
</dbReference>
<dbReference type="InterPro" id="IPR012340">
    <property type="entry name" value="NA-bd_OB-fold"/>
</dbReference>
<dbReference type="InterPro" id="IPR012162">
    <property type="entry name" value="PNPase"/>
</dbReference>
<dbReference type="InterPro" id="IPR027408">
    <property type="entry name" value="PNPase/RNase_PH_dom_sf"/>
</dbReference>
<dbReference type="InterPro" id="IPR015848">
    <property type="entry name" value="PNPase_PH_RNA-bd_bac/org-type"/>
</dbReference>
<dbReference type="InterPro" id="IPR036456">
    <property type="entry name" value="PNPase_PH_RNA-bd_sf"/>
</dbReference>
<dbReference type="InterPro" id="IPR020568">
    <property type="entry name" value="Ribosomal_Su5_D2-typ_SF"/>
</dbReference>
<dbReference type="InterPro" id="IPR003029">
    <property type="entry name" value="S1_domain"/>
</dbReference>
<dbReference type="NCBIfam" id="TIGR03591">
    <property type="entry name" value="polynuc_phos"/>
    <property type="match status" value="1"/>
</dbReference>
<dbReference type="NCBIfam" id="NF008805">
    <property type="entry name" value="PRK11824.1"/>
    <property type="match status" value="1"/>
</dbReference>
<dbReference type="PANTHER" id="PTHR11252">
    <property type="entry name" value="POLYRIBONUCLEOTIDE NUCLEOTIDYLTRANSFERASE"/>
    <property type="match status" value="1"/>
</dbReference>
<dbReference type="PANTHER" id="PTHR11252:SF0">
    <property type="entry name" value="POLYRIBONUCLEOTIDE NUCLEOTIDYLTRANSFERASE 1, MITOCHONDRIAL"/>
    <property type="match status" value="1"/>
</dbReference>
<dbReference type="Pfam" id="PF00013">
    <property type="entry name" value="KH_1"/>
    <property type="match status" value="1"/>
</dbReference>
<dbReference type="Pfam" id="PF03726">
    <property type="entry name" value="PNPase"/>
    <property type="match status" value="1"/>
</dbReference>
<dbReference type="Pfam" id="PF01138">
    <property type="entry name" value="RNase_PH"/>
    <property type="match status" value="2"/>
</dbReference>
<dbReference type="Pfam" id="PF03725">
    <property type="entry name" value="RNase_PH_C"/>
    <property type="match status" value="2"/>
</dbReference>
<dbReference type="Pfam" id="PF00575">
    <property type="entry name" value="S1"/>
    <property type="match status" value="1"/>
</dbReference>
<dbReference type="SMART" id="SM00322">
    <property type="entry name" value="KH"/>
    <property type="match status" value="1"/>
</dbReference>
<dbReference type="SMART" id="SM00316">
    <property type="entry name" value="S1"/>
    <property type="match status" value="1"/>
</dbReference>
<dbReference type="SUPFAM" id="SSF54791">
    <property type="entry name" value="Eukaryotic type KH-domain (KH-domain type I)"/>
    <property type="match status" value="1"/>
</dbReference>
<dbReference type="SUPFAM" id="SSF50249">
    <property type="entry name" value="Nucleic acid-binding proteins"/>
    <property type="match status" value="1"/>
</dbReference>
<dbReference type="SUPFAM" id="SSF46915">
    <property type="entry name" value="Polynucleotide phosphorylase/guanosine pentaphosphate synthase (PNPase/GPSI), domain 3"/>
    <property type="match status" value="1"/>
</dbReference>
<dbReference type="SUPFAM" id="SSF55666">
    <property type="entry name" value="Ribonuclease PH domain 2-like"/>
    <property type="match status" value="2"/>
</dbReference>
<dbReference type="SUPFAM" id="SSF54211">
    <property type="entry name" value="Ribosomal protein S5 domain 2-like"/>
    <property type="match status" value="2"/>
</dbReference>
<dbReference type="PROSITE" id="PS50084">
    <property type="entry name" value="KH_TYPE_1"/>
    <property type="match status" value="1"/>
</dbReference>
<dbReference type="PROSITE" id="PS50126">
    <property type="entry name" value="S1"/>
    <property type="match status" value="1"/>
</dbReference>
<sequence length="838" mass="89762">MFDITRKCVEWGDRSLTIESGKIARQAGGAVVVDYGGTSVLATVVSQKSKEAVDFLPLTVQFLAKSYAVGKIPGGFFKREGKPSDRETLISRIIDRSIRPLFPSGFSDEVAVVCNLLSYDASSPPETVALIGASAALAISGIPFHCPVAGARIGYIRGEGRYILNPSADELSVSALDMFYARTDTSILMVESEAHELTEAEMLGALQFGHEHCEEIIKVIGEFAEEARKCAPAEFVPCDLSTIIDSIGSDYKERFLVAYSEKEKKARVAKLDAVRASLTEDLRVKFLSESEGGSKYIAQDIVYAMKTFERSLVRERVLESKSRIDGRAYDQIRNIEIEVDLISKAHGSALFTRGDTQALVITALGTPQDEQIVDGFDGDKRERFLLHYNFPPYAVGEASALRPPGRREIGHGKLAWRAIHPVLPSKADFPYTIRVVSEITESDGSSSMATVCGASLALMDTGVPLKSSVAGIAMGLIKEGDRYAILSDILGDEDYLGDMDFKVAGTREGITALQMDMKVKGIDFAVLGTALDQAKEGRFFIIEKMDRVIKESRGAVREHVPRMESMLIDKGKIKNVIGAGGKNVREICEKTGAKIEISQDGTVMIYAVGREAIESAKDMITGIVSEPEVGKIYSGEVCELAKYGAFVTFLGARKGLVHISEIRNEHINAVADVLAVGDKVKVLVIDMDKDHIQLSMRRIDQETGDQVDCELYAPQRRNGVAAGNTVGDSSVNGGGAGSVYVPRGDYGGASAGRNGRGGGKRDGAAKSSSSAGNGGGRSSSSTRRRHSAGSSGYSSDSSSGNTKSSSSESSGGTGGRGRNGANGDVQNGPAAPKKPRFF</sequence>
<name>PNP_ANAPZ</name>
<organism>
    <name type="scientific">Anaplasma phagocytophilum (strain HZ)</name>
    <dbReference type="NCBI Taxonomy" id="212042"/>
    <lineage>
        <taxon>Bacteria</taxon>
        <taxon>Pseudomonadati</taxon>
        <taxon>Pseudomonadota</taxon>
        <taxon>Alphaproteobacteria</taxon>
        <taxon>Rickettsiales</taxon>
        <taxon>Anaplasmataceae</taxon>
        <taxon>Anaplasma</taxon>
        <taxon>phagocytophilum group</taxon>
    </lineage>
</organism>
<protein>
    <recommendedName>
        <fullName evidence="1">Polyribonucleotide nucleotidyltransferase</fullName>
        <ecNumber evidence="1">2.7.7.8</ecNumber>
    </recommendedName>
    <alternativeName>
        <fullName evidence="1">Polynucleotide phosphorylase</fullName>
        <shortName evidence="1">PNPase</shortName>
    </alternativeName>
</protein>
<gene>
    <name evidence="1" type="primary">pnp</name>
    <name type="ordered locus">APH_0767</name>
</gene>
<comment type="function">
    <text evidence="1">Involved in mRNA degradation. Catalyzes the phosphorolysis of single-stranded polyribonucleotides processively in the 3'- to 5'-direction.</text>
</comment>
<comment type="catalytic activity">
    <reaction evidence="1">
        <text>RNA(n+1) + phosphate = RNA(n) + a ribonucleoside 5'-diphosphate</text>
        <dbReference type="Rhea" id="RHEA:22096"/>
        <dbReference type="Rhea" id="RHEA-COMP:14527"/>
        <dbReference type="Rhea" id="RHEA-COMP:17342"/>
        <dbReference type="ChEBI" id="CHEBI:43474"/>
        <dbReference type="ChEBI" id="CHEBI:57930"/>
        <dbReference type="ChEBI" id="CHEBI:140395"/>
        <dbReference type="EC" id="2.7.7.8"/>
    </reaction>
</comment>
<comment type="cofactor">
    <cofactor evidence="1">
        <name>Mg(2+)</name>
        <dbReference type="ChEBI" id="CHEBI:18420"/>
    </cofactor>
</comment>
<comment type="subcellular location">
    <subcellularLocation>
        <location evidence="1">Cytoplasm</location>
    </subcellularLocation>
</comment>
<comment type="similarity">
    <text evidence="1">Belongs to the polyribonucleotide nucleotidyltransferase family.</text>
</comment>
<accession>Q2GJV5</accession>
<evidence type="ECO:0000255" key="1">
    <source>
        <dbReference type="HAMAP-Rule" id="MF_01595"/>
    </source>
</evidence>
<evidence type="ECO:0000256" key="2">
    <source>
        <dbReference type="SAM" id="MobiDB-lite"/>
    </source>
</evidence>
<proteinExistence type="inferred from homology"/>
<feature type="chain" id="PRO_0000329501" description="Polyribonucleotide nucleotidyltransferase">
    <location>
        <begin position="1"/>
        <end position="838"/>
    </location>
</feature>
<feature type="domain" description="KH" evidence="1">
    <location>
        <begin position="561"/>
        <end position="620"/>
    </location>
</feature>
<feature type="domain" description="S1 motif" evidence="1">
    <location>
        <begin position="630"/>
        <end position="697"/>
    </location>
</feature>
<feature type="region of interest" description="Disordered" evidence="2">
    <location>
        <begin position="747"/>
        <end position="838"/>
    </location>
</feature>
<feature type="compositionally biased region" description="Gly residues" evidence="2">
    <location>
        <begin position="747"/>
        <end position="757"/>
    </location>
</feature>
<feature type="compositionally biased region" description="Low complexity" evidence="2">
    <location>
        <begin position="788"/>
        <end position="810"/>
    </location>
</feature>
<feature type="compositionally biased region" description="Gly residues" evidence="2">
    <location>
        <begin position="811"/>
        <end position="820"/>
    </location>
</feature>
<feature type="binding site" evidence="1">
    <location>
        <position position="494"/>
    </location>
    <ligand>
        <name>Mg(2+)</name>
        <dbReference type="ChEBI" id="CHEBI:18420"/>
    </ligand>
</feature>
<feature type="binding site" evidence="1">
    <location>
        <position position="500"/>
    </location>
    <ligand>
        <name>Mg(2+)</name>
        <dbReference type="ChEBI" id="CHEBI:18420"/>
    </ligand>
</feature>